<keyword id="KW-0472">Membrane</keyword>
<keyword id="KW-0509">mRNA transport</keyword>
<keyword id="KW-0906">Nuclear pore complex</keyword>
<keyword id="KW-0539">Nucleus</keyword>
<keyword id="KW-0653">Protein transport</keyword>
<keyword id="KW-1185">Reference proteome</keyword>
<keyword id="KW-0811">Translocation</keyword>
<keyword id="KW-0813">Transport</keyword>
<dbReference type="EMBL" id="U77595">
    <property type="protein sequence ID" value="AAB61137.1"/>
    <property type="molecule type" value="mRNA"/>
</dbReference>
<dbReference type="EMBL" id="BC044466">
    <property type="protein sequence ID" value="AAH44466.1"/>
    <property type="molecule type" value="mRNA"/>
</dbReference>
<dbReference type="EMBL" id="AB047683">
    <property type="protein sequence ID" value="BAB12206.1"/>
    <property type="molecule type" value="Genomic_DNA"/>
</dbReference>
<dbReference type="RefSeq" id="NP_571056.2">
    <property type="nucleotide sequence ID" value="NM_130981.2"/>
</dbReference>
<dbReference type="SMR" id="Q7ZU29"/>
<dbReference type="BioGRID" id="78401">
    <property type="interactions" value="1"/>
</dbReference>
<dbReference type="FunCoup" id="Q7ZU29">
    <property type="interactions" value="3137"/>
</dbReference>
<dbReference type="STRING" id="7955.ENSDARP00000013627"/>
<dbReference type="PaxDb" id="7955-ENSDARP00000013627"/>
<dbReference type="GeneID" id="30172"/>
<dbReference type="KEGG" id="dre:30172"/>
<dbReference type="AGR" id="ZFIN:ZDB-GENE-990415-46"/>
<dbReference type="CTD" id="9688"/>
<dbReference type="ZFIN" id="ZDB-GENE-990415-46">
    <property type="gene designation" value="nup93"/>
</dbReference>
<dbReference type="eggNOG" id="KOG2168">
    <property type="taxonomic scope" value="Eukaryota"/>
</dbReference>
<dbReference type="InParanoid" id="Q7ZU29"/>
<dbReference type="OrthoDB" id="1918363at2759"/>
<dbReference type="PhylomeDB" id="Q7ZU29"/>
<dbReference type="PRO" id="PR:Q7ZU29"/>
<dbReference type="Proteomes" id="UP000000437">
    <property type="component" value="Alternate scaffold 18"/>
</dbReference>
<dbReference type="Proteomes" id="UP000000437">
    <property type="component" value="Chromosome 18"/>
</dbReference>
<dbReference type="GO" id="GO:0031965">
    <property type="term" value="C:nuclear membrane"/>
    <property type="evidence" value="ECO:0000250"/>
    <property type="project" value="UniProtKB"/>
</dbReference>
<dbReference type="GO" id="GO:0034399">
    <property type="term" value="C:nuclear periphery"/>
    <property type="evidence" value="ECO:0000250"/>
    <property type="project" value="UniProtKB"/>
</dbReference>
<dbReference type="GO" id="GO:0005643">
    <property type="term" value="C:nuclear pore"/>
    <property type="evidence" value="ECO:0000250"/>
    <property type="project" value="UniProtKB"/>
</dbReference>
<dbReference type="GO" id="GO:0017056">
    <property type="term" value="F:structural constituent of nuclear pore"/>
    <property type="evidence" value="ECO:0000250"/>
    <property type="project" value="UniProtKB"/>
</dbReference>
<dbReference type="GO" id="GO:0051292">
    <property type="term" value="P:nuclear pore complex assembly"/>
    <property type="evidence" value="ECO:0000250"/>
    <property type="project" value="UniProtKB"/>
</dbReference>
<dbReference type="GO" id="GO:0016973">
    <property type="term" value="P:poly(A)+ mRNA export from nucleus"/>
    <property type="evidence" value="ECO:0000318"/>
    <property type="project" value="GO_Central"/>
</dbReference>
<dbReference type="GO" id="GO:0006606">
    <property type="term" value="P:protein import into nucleus"/>
    <property type="evidence" value="ECO:0000318"/>
    <property type="project" value="GO_Central"/>
</dbReference>
<dbReference type="InterPro" id="IPR007231">
    <property type="entry name" value="Nucleoporin_int_Nup93/Nic96"/>
</dbReference>
<dbReference type="PANTHER" id="PTHR11225:SF4">
    <property type="entry name" value="NUCLEAR PORE COMPLEX PROTEIN NUP93"/>
    <property type="match status" value="1"/>
</dbReference>
<dbReference type="PANTHER" id="PTHR11225">
    <property type="entry name" value="NUCLEAR PORE COMPLEX PROTEIN NUP93 NUCLEOPORIN NUP93 DEAD EYE PROTEIN"/>
    <property type="match status" value="1"/>
</dbReference>
<dbReference type="Pfam" id="PF04097">
    <property type="entry name" value="Nic96"/>
    <property type="match status" value="1"/>
</dbReference>
<gene>
    <name type="primary">dye</name>
</gene>
<organism>
    <name type="scientific">Danio rerio</name>
    <name type="common">Zebrafish</name>
    <name type="synonym">Brachydanio rerio</name>
    <dbReference type="NCBI Taxonomy" id="7955"/>
    <lineage>
        <taxon>Eukaryota</taxon>
        <taxon>Metazoa</taxon>
        <taxon>Chordata</taxon>
        <taxon>Craniata</taxon>
        <taxon>Vertebrata</taxon>
        <taxon>Euteleostomi</taxon>
        <taxon>Actinopterygii</taxon>
        <taxon>Neopterygii</taxon>
        <taxon>Teleostei</taxon>
        <taxon>Ostariophysi</taxon>
        <taxon>Cypriniformes</taxon>
        <taxon>Danionidae</taxon>
        <taxon>Danioninae</taxon>
        <taxon>Danio</taxon>
    </lineage>
</organism>
<accession>Q7ZU29</accession>
<accession>P79740</accession>
<accession>Q9DGQ8</accession>
<feature type="chain" id="PRO_0000124785" description="Nuclear pore complex protein Nup93">
    <location>
        <begin position="1"/>
        <end position="820"/>
    </location>
</feature>
<feature type="sequence conflict" description="In Ref. 3; BAB12206." evidence="3" ref="3">
    <original>QQ</original>
    <variation>HE</variation>
    <location>
        <begin position="37"/>
        <end position="38"/>
    </location>
</feature>
<feature type="sequence conflict" description="In Ref. 1; AAB61137." evidence="3" ref="1">
    <original>MQM</original>
    <variation>TQV</variation>
    <location>
        <begin position="251"/>
        <end position="253"/>
    </location>
</feature>
<feature type="sequence conflict" description="In Ref. 1; AAB61137." evidence="3" ref="1">
    <original>R</original>
    <variation>M</variation>
    <location>
        <position position="309"/>
    </location>
</feature>
<feature type="sequence conflict" description="In Ref. 1; AAB61137." evidence="3" ref="1">
    <original>D</original>
    <variation>G</variation>
    <location>
        <position position="385"/>
    </location>
</feature>
<feature type="sequence conflict" description="In Ref. 1; AAB61137." evidence="3" ref="1">
    <original>E</original>
    <variation>G</variation>
    <location>
        <position position="729"/>
    </location>
</feature>
<feature type="sequence conflict" description="In Ref. 1; AAB61137." evidence="3" ref="1">
    <original>Q</original>
    <variation>R</variation>
    <location>
        <position position="776"/>
    </location>
</feature>
<sequence>MDTEGFGELLQQAEQLAAETEAVSELPHVERNLQEIQQAGERLRSRTLTRTSQDTADVKASILLGSRGLDIFHISQRLESLSAATTFEPLEPVKDTDIQGFLKNERDNALLSAIEESRRRTFLLAEEYHRDSMLVQWEQVKQRVLHTLLGAGEDALDFSQEVEPSFVSEVGVPGRSALDSVEVAYSRQIYVFNEKIVNGHLQPNLGDLCASVAESLDDKNVSEMWLMVKQMTDVLLVPAKDTLKSRVSVDMQMAFVRQALQFLENSYKNYTLVTVFGNLHQAQLGGVPGTYQLVCSFLNIKLPTPLPGRQDGEVEGHPVWALIYFCLRCGDLSAAMQVVNKAQHQLGDFKIWFQEYMNSPDRRLSPATENKLRLHYRRVLRNSADPYKRAVYCLIGKCDIGDNHGEVADKTEDYLWLKLNQVCFDEDGSSSPQDRMTLAQLQKQLLEDYGESHFSASHQPFLYFQVLFLTAQFEAAIAFLFRVERLRSHAVHVALVLYELKLLLKSSGQSAQLLSQEAGDPPMVRRLNFIRLLMLYTRKFESTDPREALQYFYFLRNEKDSQGENMFMRCVSELVIESREFDMLLGRLEKDGSRKPGVIDKFAGDTRAIITKVASEAENKGLFEEAVKLYELAKNADKVLELMNKLLSPVIAQVSEPQSNKERLKNMAVAIAERYRANGVAGEKSVDNTFYLLLDLMTFFDEYHAGHIDRAYDVIERLKLVPLSQDSVEERVAAFRNFSDEVRHNLSEVLLATMNILFTQYKRLKGAAAGTPGRPQRTLEDRDMLLRIQARALITFAGMIPYRMAGDTNARLVQMEVLMN</sequence>
<reference key="1">
    <citation type="journal article" date="1996" name="Genes Dev.">
        <title>Insertional mutagenesis in zebrafish identifies two novel genes, pescadillo and dead eye, essential for embryonic development.</title>
        <authorList>
            <person name="Allende M.L."/>
            <person name="Amsterdam A."/>
            <person name="Becker T."/>
            <person name="Kawakami K."/>
            <person name="Gaiano N."/>
            <person name="Hopkins N."/>
        </authorList>
    </citation>
    <scope>NUCLEOTIDE SEQUENCE [MRNA]</scope>
    <scope>DISRUPTION PHENOTYPE</scope>
</reference>
<reference key="2">
    <citation type="submission" date="2003-01" db="EMBL/GenBank/DDBJ databases">
        <authorList>
            <consortium name="NIH - Zebrafish Gene Collection (ZGC) project"/>
        </authorList>
    </citation>
    <scope>NUCLEOTIDE SEQUENCE [LARGE SCALE MRNA]</scope>
    <source>
        <strain>AB</strain>
    </source>
</reference>
<reference key="3">
    <citation type="submission" date="2000-08" db="EMBL/GenBank/DDBJ databases">
        <title>Danio rerio gene for dead eye, exon 1, 2, partial cds.</title>
        <authorList>
            <person name="Kawakami K."/>
        </authorList>
    </citation>
    <scope>NUCLEOTIDE SEQUENCE [GENOMIC DNA] OF 1-60</scope>
</reference>
<protein>
    <recommendedName>
        <fullName>Nuclear pore complex protein Nup93</fullName>
    </recommendedName>
    <alternativeName>
        <fullName>93 kDa nucleoporin</fullName>
    </alternativeName>
    <alternativeName>
        <fullName>Dead eye protein</fullName>
    </alternativeName>
    <alternativeName>
        <fullName>Nucleoporin Nup93</fullName>
    </alternativeName>
</protein>
<evidence type="ECO:0000250" key="1"/>
<evidence type="ECO:0000269" key="2">
    <source>
    </source>
</evidence>
<evidence type="ECO:0000305" key="3"/>
<comment type="function">
    <text evidence="1">Plays a role in the nuclear pore complex (NPC) assembly and/or maintenance.</text>
</comment>
<comment type="subcellular location">
    <subcellularLocation>
        <location evidence="1">Nucleus membrane</location>
        <topology evidence="1">Peripheral membrane protein</topology>
    </subcellularLocation>
    <subcellularLocation>
        <location evidence="1">Nucleus</location>
        <location evidence="1">Nuclear pore complex</location>
    </subcellularLocation>
    <text evidence="1">Localizes at the nuclear basket and at or near the nuclear entry to the gated channel of the pore.</text>
</comment>
<comment type="disruption phenotype">
    <text evidence="2">Mutants can be recognized on day 2 of embryogenesis by the presence of necrotic cells in the tectum and eyes. Dye mutants die on day 5 of development.</text>
</comment>
<comment type="similarity">
    <text evidence="3">Belongs to the nucleoporin interacting component (NIC) family.</text>
</comment>
<proteinExistence type="evidence at transcript level"/>
<name>NUP93_DANRE</name>